<comment type="function">
    <text evidence="1">Might be efficient in the degradation of transiently denatured and unfolded proteins which accumulate in the periplasm following stress conditions.</text>
</comment>
<comment type="catalytic activity">
    <reaction>
        <text>Acts on substrates that are at least partially unfolded. The cleavage site P1 residue is normally between a pair of hydrophobic residues, such as Val-|-Val.</text>
        <dbReference type="EC" id="3.4.21.107"/>
    </reaction>
</comment>
<comment type="subcellular location">
    <subcellularLocation>
        <location evidence="4">Periplasm</location>
    </subcellularLocation>
</comment>
<comment type="similarity">
    <text evidence="4">Belongs to the peptidase S1C family.</text>
</comment>
<proteinExistence type="inferred from homology"/>
<feature type="signal peptide" evidence="2">
    <location>
        <begin position="1"/>
        <end position="25"/>
    </location>
</feature>
<feature type="chain" id="PRO_5000259260" description="Probable periplasmic serine endoprotease DegP-like">
    <location>
        <begin position="26"/>
        <end position="469"/>
    </location>
</feature>
<feature type="domain" description="PDZ 1" evidence="3">
    <location>
        <begin position="261"/>
        <end position="352"/>
    </location>
</feature>
<feature type="domain" description="PDZ 2" evidence="3">
    <location>
        <begin position="358"/>
        <end position="458"/>
    </location>
</feature>
<feature type="active site" description="Charge relay system" evidence="1">
    <location>
        <position position="114"/>
    </location>
</feature>
<feature type="active site" description="Charge relay system" evidence="2">
    <location>
        <position position="144"/>
    </location>
</feature>
<feature type="active site" description="Charge relay system" evidence="1">
    <location>
        <position position="217"/>
    </location>
</feature>
<feature type="binding site" evidence="1">
    <location>
        <begin position="215"/>
        <end position="217"/>
    </location>
    <ligand>
        <name>substrate</name>
    </ligand>
</feature>
<feature type="binding site" evidence="1">
    <location>
        <begin position="272"/>
        <end position="276"/>
    </location>
    <ligand>
        <name>substrate</name>
    </ligand>
</feature>
<evidence type="ECO:0000250" key="1"/>
<evidence type="ECO:0000255" key="2"/>
<evidence type="ECO:0000255" key="3">
    <source>
        <dbReference type="PROSITE-ProRule" id="PRU00143"/>
    </source>
</evidence>
<evidence type="ECO:0000305" key="4"/>
<name>DEGPL_MARMS</name>
<protein>
    <recommendedName>
        <fullName>Probable periplasmic serine endoprotease DegP-like</fullName>
        <ecNumber>3.4.21.107</ecNumber>
    </recommendedName>
    <alternativeName>
        <fullName>Protease Do</fullName>
    </alternativeName>
</protein>
<organism>
    <name type="scientific">Marinomonas sp. (strain MWYL1)</name>
    <dbReference type="NCBI Taxonomy" id="400668"/>
    <lineage>
        <taxon>Bacteria</taxon>
        <taxon>Pseudomonadati</taxon>
        <taxon>Pseudomonadota</taxon>
        <taxon>Gammaproteobacteria</taxon>
        <taxon>Oceanospirillales</taxon>
        <taxon>Oceanospirillaceae</taxon>
        <taxon>Marinomonas</taxon>
    </lineage>
</organism>
<gene>
    <name type="ordered locus">Mmwyl1_1102</name>
</gene>
<dbReference type="EC" id="3.4.21.107"/>
<dbReference type="EMBL" id="CP000749">
    <property type="protein sequence ID" value="ABR70033.1"/>
    <property type="molecule type" value="Genomic_DNA"/>
</dbReference>
<dbReference type="SMR" id="A6VUA4"/>
<dbReference type="STRING" id="400668.Mmwyl1_1102"/>
<dbReference type="KEGG" id="mmw:Mmwyl1_1102"/>
<dbReference type="eggNOG" id="COG0265">
    <property type="taxonomic scope" value="Bacteria"/>
</dbReference>
<dbReference type="HOGENOM" id="CLU_020120_1_0_6"/>
<dbReference type="OrthoDB" id="9758917at2"/>
<dbReference type="GO" id="GO:0042597">
    <property type="term" value="C:periplasmic space"/>
    <property type="evidence" value="ECO:0007669"/>
    <property type="project" value="UniProtKB-SubCell"/>
</dbReference>
<dbReference type="GO" id="GO:0004252">
    <property type="term" value="F:serine-type endopeptidase activity"/>
    <property type="evidence" value="ECO:0007669"/>
    <property type="project" value="InterPro"/>
</dbReference>
<dbReference type="GO" id="GO:0006508">
    <property type="term" value="P:proteolysis"/>
    <property type="evidence" value="ECO:0007669"/>
    <property type="project" value="UniProtKB-KW"/>
</dbReference>
<dbReference type="CDD" id="cd10839">
    <property type="entry name" value="cpPDZ1_DegP-like"/>
    <property type="match status" value="1"/>
</dbReference>
<dbReference type="CDD" id="cd23084">
    <property type="entry name" value="cpPDZ2_DegP-like"/>
    <property type="match status" value="1"/>
</dbReference>
<dbReference type="FunFam" id="2.40.10.120:FF:000007">
    <property type="entry name" value="Periplasmic serine endoprotease DegP-like"/>
    <property type="match status" value="1"/>
</dbReference>
<dbReference type="Gene3D" id="2.30.42.10">
    <property type="match status" value="1"/>
</dbReference>
<dbReference type="Gene3D" id="2.30.42.60">
    <property type="match status" value="1"/>
</dbReference>
<dbReference type="Gene3D" id="2.40.10.120">
    <property type="match status" value="1"/>
</dbReference>
<dbReference type="InterPro" id="IPR001478">
    <property type="entry name" value="PDZ"/>
</dbReference>
<dbReference type="InterPro" id="IPR041489">
    <property type="entry name" value="PDZ_6"/>
</dbReference>
<dbReference type="InterPro" id="IPR036034">
    <property type="entry name" value="PDZ_sf"/>
</dbReference>
<dbReference type="InterPro" id="IPR011782">
    <property type="entry name" value="Pept_S1C_Do"/>
</dbReference>
<dbReference type="InterPro" id="IPR009003">
    <property type="entry name" value="Peptidase_S1_PA"/>
</dbReference>
<dbReference type="InterPro" id="IPR001940">
    <property type="entry name" value="Peptidase_S1C"/>
</dbReference>
<dbReference type="NCBIfam" id="TIGR02037">
    <property type="entry name" value="degP_htrA_DO"/>
    <property type="match status" value="1"/>
</dbReference>
<dbReference type="PANTHER" id="PTHR22939:SF130">
    <property type="entry name" value="PERIPLASMIC SERINE ENDOPROTEASE DEGP-LIKE-RELATED"/>
    <property type="match status" value="1"/>
</dbReference>
<dbReference type="PANTHER" id="PTHR22939">
    <property type="entry name" value="SERINE PROTEASE FAMILY S1C HTRA-RELATED"/>
    <property type="match status" value="1"/>
</dbReference>
<dbReference type="Pfam" id="PF13180">
    <property type="entry name" value="PDZ_2"/>
    <property type="match status" value="1"/>
</dbReference>
<dbReference type="Pfam" id="PF17820">
    <property type="entry name" value="PDZ_6"/>
    <property type="match status" value="1"/>
</dbReference>
<dbReference type="Pfam" id="PF13365">
    <property type="entry name" value="Trypsin_2"/>
    <property type="match status" value="1"/>
</dbReference>
<dbReference type="PRINTS" id="PR00834">
    <property type="entry name" value="PROTEASES2C"/>
</dbReference>
<dbReference type="SMART" id="SM00228">
    <property type="entry name" value="PDZ"/>
    <property type="match status" value="2"/>
</dbReference>
<dbReference type="SUPFAM" id="SSF50156">
    <property type="entry name" value="PDZ domain-like"/>
    <property type="match status" value="2"/>
</dbReference>
<dbReference type="SUPFAM" id="SSF50494">
    <property type="entry name" value="Trypsin-like serine proteases"/>
    <property type="match status" value="1"/>
</dbReference>
<dbReference type="PROSITE" id="PS50106">
    <property type="entry name" value="PDZ"/>
    <property type="match status" value="2"/>
</dbReference>
<accession>A6VUA4</accession>
<keyword id="KW-0378">Hydrolase</keyword>
<keyword id="KW-0574">Periplasm</keyword>
<keyword id="KW-0645">Protease</keyword>
<keyword id="KW-0677">Repeat</keyword>
<keyword id="KW-0720">Serine protease</keyword>
<keyword id="KW-0732">Signal</keyword>
<keyword id="KW-0346">Stress response</keyword>
<sequence>MNRLLKQVCMVVVSSFMMASMLTHAASLPDFTELVEKASPAVVNISTEQTVTTKTANEGGQQLGPNSEELNEFFKHFFGQQPFGQQAPPQQGQRSSLGSGFIISHDGYVLTNNHVIDGADVIHVRLNDRREYVAKLVGTDPRTDLALLKIEADDLPIVKMGDSDKLKPGQWVLAIGSPFGFDYTVTAGIVSATGRSLPSDNYVPFIQTDVAINPGNSGGPLFNLDGEVVGINSQIYTRSGGFMGVSFAIPSKVAMSVVDQLKSDGKVSRAWLGVLIQDVNNELAESFGLDRSNGALISRVLPDSPAEKAGLKSGDIILEFNGQSIAHSGELPYIVGQMKADEKVDAKVYRDGKEQTISVTLEARPNDPKVVAQSQQDQNRLGMIVGEVPADMAKKFEIDNGVVIEQVLGGTAARNGLQQGDVITMLNGKRITSVAEFAKIAKDIPSGRSVPMRVIRQGYPMFIPFKIMD</sequence>
<reference key="1">
    <citation type="submission" date="2007-06" db="EMBL/GenBank/DDBJ databases">
        <title>Complete sequence of Marinomonas sp. MWYL1.</title>
        <authorList>
            <consortium name="US DOE Joint Genome Institute"/>
            <person name="Copeland A."/>
            <person name="Lucas S."/>
            <person name="Lapidus A."/>
            <person name="Barry K."/>
            <person name="Glavina del Rio T."/>
            <person name="Dalin E."/>
            <person name="Tice H."/>
            <person name="Pitluck S."/>
            <person name="Kiss H."/>
            <person name="Brettin T."/>
            <person name="Bruce D."/>
            <person name="Detter J.C."/>
            <person name="Han C."/>
            <person name="Schmutz J."/>
            <person name="Larimer F."/>
            <person name="Land M."/>
            <person name="Hauser L."/>
            <person name="Kyrpides N."/>
            <person name="Kim E."/>
            <person name="Johnston A.W.B."/>
            <person name="Todd J.D."/>
            <person name="Rogers R."/>
            <person name="Wexler M."/>
            <person name="Bond P.L."/>
            <person name="Li Y."/>
            <person name="Richardson P."/>
        </authorList>
    </citation>
    <scope>NUCLEOTIDE SEQUENCE [LARGE SCALE GENOMIC DNA]</scope>
    <source>
        <strain>MWYL1</strain>
    </source>
</reference>